<gene>
    <name type="primary">ARL11</name>
</gene>
<accession>Q58DI9</accession>
<protein>
    <recommendedName>
        <fullName>ADP-ribosylation factor-like protein 11</fullName>
    </recommendedName>
</protein>
<keyword id="KW-0342">GTP-binding</keyword>
<keyword id="KW-0449">Lipoprotein</keyword>
<keyword id="KW-0519">Myristate</keyword>
<keyword id="KW-0547">Nucleotide-binding</keyword>
<keyword id="KW-1185">Reference proteome</keyword>
<sequence>MGSVSSRGHRAEAQVVMMGLDSAGKTTLLYRLKGYQLVETLPTVGFNVEPLEEPGHVSLTLWDVGGQSQLRASWKDHLEGTDILVYVLDSTDEARLPEAVAELREVLDDPSVASVPLLVLANKQEVPQALSLPEIRDRLGLQGFLGRSWDLRACSALTGAGLPEALESLRSLLKSCSLCMAR</sequence>
<comment type="function">
    <text evidence="1">May play a role in apoptosis. May act as a tumor suppressor (By similarity).</text>
</comment>
<comment type="similarity">
    <text evidence="3">Belongs to the small GTPase superfamily. Arf family.</text>
</comment>
<name>ARL11_BOVIN</name>
<feature type="initiator methionine" description="Removed" evidence="2">
    <location>
        <position position="1"/>
    </location>
</feature>
<feature type="chain" id="PRO_0000207478" description="ADP-ribosylation factor-like protein 11">
    <location>
        <begin position="2"/>
        <end position="182"/>
    </location>
</feature>
<feature type="binding site" evidence="1">
    <location>
        <begin position="19"/>
        <end position="26"/>
    </location>
    <ligand>
        <name>GTP</name>
        <dbReference type="ChEBI" id="CHEBI:37565"/>
    </ligand>
</feature>
<feature type="binding site" evidence="1">
    <location>
        <begin position="63"/>
        <end position="67"/>
    </location>
    <ligand>
        <name>GTP</name>
        <dbReference type="ChEBI" id="CHEBI:37565"/>
    </ligand>
</feature>
<feature type="binding site" evidence="1">
    <location>
        <begin position="122"/>
        <end position="125"/>
    </location>
    <ligand>
        <name>GTP</name>
        <dbReference type="ChEBI" id="CHEBI:37565"/>
    </ligand>
</feature>
<feature type="lipid moiety-binding region" description="N-myristoyl glycine" evidence="2">
    <location>
        <position position="2"/>
    </location>
</feature>
<proteinExistence type="evidence at transcript level"/>
<organism>
    <name type="scientific">Bos taurus</name>
    <name type="common">Bovine</name>
    <dbReference type="NCBI Taxonomy" id="9913"/>
    <lineage>
        <taxon>Eukaryota</taxon>
        <taxon>Metazoa</taxon>
        <taxon>Chordata</taxon>
        <taxon>Craniata</taxon>
        <taxon>Vertebrata</taxon>
        <taxon>Euteleostomi</taxon>
        <taxon>Mammalia</taxon>
        <taxon>Eutheria</taxon>
        <taxon>Laurasiatheria</taxon>
        <taxon>Artiodactyla</taxon>
        <taxon>Ruminantia</taxon>
        <taxon>Pecora</taxon>
        <taxon>Bovidae</taxon>
        <taxon>Bovinae</taxon>
        <taxon>Bos</taxon>
    </lineage>
</organism>
<reference key="1">
    <citation type="journal article" date="2005" name="BMC Genomics">
        <title>Characterization of 954 bovine full-CDS cDNA sequences.</title>
        <authorList>
            <person name="Harhay G.P."/>
            <person name="Sonstegard T.S."/>
            <person name="Keele J.W."/>
            <person name="Heaton M.P."/>
            <person name="Clawson M.L."/>
            <person name="Snelling W.M."/>
            <person name="Wiedmann R.T."/>
            <person name="Van Tassell C.P."/>
            <person name="Smith T.P.L."/>
        </authorList>
    </citation>
    <scope>NUCLEOTIDE SEQUENCE [LARGE SCALE MRNA]</scope>
</reference>
<evidence type="ECO:0000250" key="1"/>
<evidence type="ECO:0000255" key="2"/>
<evidence type="ECO:0000305" key="3"/>
<dbReference type="EMBL" id="BT021608">
    <property type="protein sequence ID" value="AAX46455.1"/>
    <property type="molecule type" value="mRNA"/>
</dbReference>
<dbReference type="SMR" id="Q58DI9"/>
<dbReference type="FunCoup" id="Q58DI9">
    <property type="interactions" value="23"/>
</dbReference>
<dbReference type="STRING" id="9913.ENSBTAP00000052723"/>
<dbReference type="InParanoid" id="Q58DI9"/>
<dbReference type="OrthoDB" id="8484332at2759"/>
<dbReference type="Proteomes" id="UP000009136">
    <property type="component" value="Unplaced"/>
</dbReference>
<dbReference type="GO" id="GO:0005737">
    <property type="term" value="C:cytoplasm"/>
    <property type="evidence" value="ECO:0000318"/>
    <property type="project" value="GO_Central"/>
</dbReference>
<dbReference type="GO" id="GO:0005886">
    <property type="term" value="C:plasma membrane"/>
    <property type="evidence" value="ECO:0000318"/>
    <property type="project" value="GO_Central"/>
</dbReference>
<dbReference type="GO" id="GO:0005525">
    <property type="term" value="F:GTP binding"/>
    <property type="evidence" value="ECO:0000318"/>
    <property type="project" value="GO_Central"/>
</dbReference>
<dbReference type="GO" id="GO:0003924">
    <property type="term" value="F:GTPase activity"/>
    <property type="evidence" value="ECO:0007669"/>
    <property type="project" value="InterPro"/>
</dbReference>
<dbReference type="GO" id="GO:0006886">
    <property type="term" value="P:intracellular protein transport"/>
    <property type="evidence" value="ECO:0000318"/>
    <property type="project" value="GO_Central"/>
</dbReference>
<dbReference type="GO" id="GO:0016192">
    <property type="term" value="P:vesicle-mediated transport"/>
    <property type="evidence" value="ECO:0000318"/>
    <property type="project" value="GO_Central"/>
</dbReference>
<dbReference type="FunFam" id="3.40.50.300:FF:000898">
    <property type="entry name" value="ADP-ribosylation factor-like protein 11"/>
    <property type="match status" value="1"/>
</dbReference>
<dbReference type="Gene3D" id="3.40.50.300">
    <property type="entry name" value="P-loop containing nucleotide triphosphate hydrolases"/>
    <property type="match status" value="1"/>
</dbReference>
<dbReference type="InterPro" id="IPR027417">
    <property type="entry name" value="P-loop_NTPase"/>
</dbReference>
<dbReference type="InterPro" id="IPR005225">
    <property type="entry name" value="Small_GTP-bd"/>
</dbReference>
<dbReference type="InterPro" id="IPR024156">
    <property type="entry name" value="Small_GTPase_ARF"/>
</dbReference>
<dbReference type="InterPro" id="IPR006689">
    <property type="entry name" value="Small_GTPase_ARF/SAR"/>
</dbReference>
<dbReference type="NCBIfam" id="TIGR00231">
    <property type="entry name" value="small_GTP"/>
    <property type="match status" value="1"/>
</dbReference>
<dbReference type="PANTHER" id="PTHR11711">
    <property type="entry name" value="ADP RIBOSYLATION FACTOR-RELATED"/>
    <property type="match status" value="1"/>
</dbReference>
<dbReference type="Pfam" id="PF00025">
    <property type="entry name" value="Arf"/>
    <property type="match status" value="1"/>
</dbReference>
<dbReference type="PRINTS" id="PR00328">
    <property type="entry name" value="SAR1GTPBP"/>
</dbReference>
<dbReference type="SMART" id="SM00177">
    <property type="entry name" value="ARF"/>
    <property type="match status" value="1"/>
</dbReference>
<dbReference type="SMART" id="SM00178">
    <property type="entry name" value="SAR"/>
    <property type="match status" value="1"/>
</dbReference>
<dbReference type="SUPFAM" id="SSF52540">
    <property type="entry name" value="P-loop containing nucleoside triphosphate hydrolases"/>
    <property type="match status" value="1"/>
</dbReference>
<dbReference type="PROSITE" id="PS51417">
    <property type="entry name" value="ARF"/>
    <property type="match status" value="1"/>
</dbReference>